<organism>
    <name type="scientific">Coxiella burnetii (strain RSA 493 / Nine Mile phase I)</name>
    <dbReference type="NCBI Taxonomy" id="227377"/>
    <lineage>
        <taxon>Bacteria</taxon>
        <taxon>Pseudomonadati</taxon>
        <taxon>Pseudomonadota</taxon>
        <taxon>Gammaproteobacteria</taxon>
        <taxon>Legionellales</taxon>
        <taxon>Coxiellaceae</taxon>
        <taxon>Coxiella</taxon>
    </lineage>
</organism>
<sequence>MSKAFKLTSKFKPSGDQPQAIEKLVAGLEDGLAYQTLLGVTGSGKTFTIANAIEKVQRPTLILEPNKTLAAQFYAEMREFFPENAVEYFVSYYDYYQPEAYVPSSDTYIEKDASINDHIEQMRLSATKAITERHDTIIIATVSAIYGLGDPDSYLKMLLHLTRGDQIDQRKILQRLAELQYTRNDLELRRATYRVNGDIIDIYPADSEREAVRVELFDDEVENLSYFDPLTGEMLRRVPRITVYPKTHYVTPREKLLSTLDQIKIELKERLSQLEKANKLVERQRLEQRTKFDMEMILELGYCSGIENYSRYLSGRNEGEPPPTLIDYLPKDALLIIDESHVTIPQLGGMYRGDRARKETLVEYGFRLPSALDNRPLRFDEFEKLAPQTIFISATPGPYEEKQSDQVVELLVRPTGLIDPEIEVRPVATQVDDLLSEIKKRAAQNERVLVTTLTKRMAEDLTEYFTEHNVRVRYLHSDIDTVERVEIIRDLRLGVFDVLVGINLLREGLDIPEVSLVAILDADKEGFLRSERSLIQTMGRAARNVHGKAILYADRITDSMKRAMEEAERRRIAQSAYNEKHHITPKSIQKAVTEIIEGARTYTERGRFVNQAQLIAEEEAKYIAMTPKQLAKELRKLEEQMYHHARNLEFEEAAAVRDKIQHIRKGLLEVKE</sequence>
<comment type="function">
    <text evidence="1">The UvrABC repair system catalyzes the recognition and processing of DNA lesions. A damage recognition complex composed of 2 UvrA and 2 UvrB subunits scans DNA for abnormalities. Upon binding of the UvrA(2)B(2) complex to a putative damaged site, the DNA wraps around one UvrB monomer. DNA wrap is dependent on ATP binding by UvrB and probably causes local melting of the DNA helix, facilitating insertion of UvrB beta-hairpin between the DNA strands. Then UvrB probes one DNA strand for the presence of a lesion. If a lesion is found the UvrA subunits dissociate and the UvrB-DNA preincision complex is formed. This complex is subsequently bound by UvrC and the second UvrB is released. If no lesion is found, the DNA wraps around the other UvrB subunit that will check the other stand for damage.</text>
</comment>
<comment type="subunit">
    <text evidence="1">Forms a heterotetramer with UvrA during the search for lesions. Interacts with UvrC in an incision complex.</text>
</comment>
<comment type="subcellular location">
    <subcellularLocation>
        <location evidence="1">Cytoplasm</location>
    </subcellularLocation>
</comment>
<comment type="domain">
    <text evidence="1">The beta-hairpin motif is involved in DNA binding.</text>
</comment>
<comment type="similarity">
    <text evidence="1">Belongs to the UvrB family.</text>
</comment>
<reference key="1">
    <citation type="journal article" date="2003" name="Proc. Natl. Acad. Sci. U.S.A.">
        <title>Complete genome sequence of the Q-fever pathogen, Coxiella burnetii.</title>
        <authorList>
            <person name="Seshadri R."/>
            <person name="Paulsen I.T."/>
            <person name="Eisen J.A."/>
            <person name="Read T.D."/>
            <person name="Nelson K.E."/>
            <person name="Nelson W.C."/>
            <person name="Ward N.L."/>
            <person name="Tettelin H."/>
            <person name="Davidsen T.M."/>
            <person name="Beanan M.J."/>
            <person name="DeBoy R.T."/>
            <person name="Daugherty S.C."/>
            <person name="Brinkac L.M."/>
            <person name="Madupu R."/>
            <person name="Dodson R.J."/>
            <person name="Khouri H.M."/>
            <person name="Lee K.H."/>
            <person name="Carty H.A."/>
            <person name="Scanlan D."/>
            <person name="Heinzen R.A."/>
            <person name="Thompson H.A."/>
            <person name="Samuel J.E."/>
            <person name="Fraser C.M."/>
            <person name="Heidelberg J.F."/>
        </authorList>
    </citation>
    <scope>NUCLEOTIDE SEQUENCE [LARGE SCALE GENOMIC DNA]</scope>
    <source>
        <strain>RSA 493 / Nine Mile phase I</strain>
    </source>
</reference>
<proteinExistence type="inferred from homology"/>
<dbReference type="EMBL" id="AE016828">
    <property type="protein sequence ID" value="AAO90064.1"/>
    <property type="molecule type" value="Genomic_DNA"/>
</dbReference>
<dbReference type="RefSeq" id="NP_819550.1">
    <property type="nucleotide sequence ID" value="NC_002971.4"/>
</dbReference>
<dbReference type="RefSeq" id="WP_010957630.1">
    <property type="nucleotide sequence ID" value="NZ_CCYB01000051.1"/>
</dbReference>
<dbReference type="SMR" id="Q83E18"/>
<dbReference type="STRING" id="227377.CBU_0518"/>
<dbReference type="EnsemblBacteria" id="AAO90064">
    <property type="protein sequence ID" value="AAO90064"/>
    <property type="gene ID" value="CBU_0518"/>
</dbReference>
<dbReference type="GeneID" id="1208403"/>
<dbReference type="KEGG" id="cbu:CBU_0518"/>
<dbReference type="PATRIC" id="fig|227377.7.peg.512"/>
<dbReference type="eggNOG" id="COG0556">
    <property type="taxonomic scope" value="Bacteria"/>
</dbReference>
<dbReference type="HOGENOM" id="CLU_009621_2_1_6"/>
<dbReference type="OrthoDB" id="9806651at2"/>
<dbReference type="Proteomes" id="UP000002671">
    <property type="component" value="Chromosome"/>
</dbReference>
<dbReference type="GO" id="GO:0005737">
    <property type="term" value="C:cytoplasm"/>
    <property type="evidence" value="ECO:0007669"/>
    <property type="project" value="UniProtKB-SubCell"/>
</dbReference>
<dbReference type="GO" id="GO:0009380">
    <property type="term" value="C:excinuclease repair complex"/>
    <property type="evidence" value="ECO:0000318"/>
    <property type="project" value="GO_Central"/>
</dbReference>
<dbReference type="GO" id="GO:0005524">
    <property type="term" value="F:ATP binding"/>
    <property type="evidence" value="ECO:0007669"/>
    <property type="project" value="UniProtKB-UniRule"/>
</dbReference>
<dbReference type="GO" id="GO:0016887">
    <property type="term" value="F:ATP hydrolysis activity"/>
    <property type="evidence" value="ECO:0007669"/>
    <property type="project" value="InterPro"/>
</dbReference>
<dbReference type="GO" id="GO:0003677">
    <property type="term" value="F:DNA binding"/>
    <property type="evidence" value="ECO:0007669"/>
    <property type="project" value="UniProtKB-UniRule"/>
</dbReference>
<dbReference type="GO" id="GO:0009381">
    <property type="term" value="F:excinuclease ABC activity"/>
    <property type="evidence" value="ECO:0007669"/>
    <property type="project" value="UniProtKB-UniRule"/>
</dbReference>
<dbReference type="GO" id="GO:0000715">
    <property type="term" value="P:nucleotide-excision repair, DNA damage recognition"/>
    <property type="evidence" value="ECO:0000318"/>
    <property type="project" value="GO_Central"/>
</dbReference>
<dbReference type="GO" id="GO:0009432">
    <property type="term" value="P:SOS response"/>
    <property type="evidence" value="ECO:0007669"/>
    <property type="project" value="UniProtKB-UniRule"/>
</dbReference>
<dbReference type="CDD" id="cd17916">
    <property type="entry name" value="DEXHc_UvrB"/>
    <property type="match status" value="1"/>
</dbReference>
<dbReference type="CDD" id="cd18790">
    <property type="entry name" value="SF2_C_UvrB"/>
    <property type="match status" value="1"/>
</dbReference>
<dbReference type="FunFam" id="3.40.50.300:FF:000477">
    <property type="entry name" value="UvrABC system protein B"/>
    <property type="match status" value="1"/>
</dbReference>
<dbReference type="Gene3D" id="6.10.140.240">
    <property type="match status" value="1"/>
</dbReference>
<dbReference type="Gene3D" id="3.40.50.300">
    <property type="entry name" value="P-loop containing nucleotide triphosphate hydrolases"/>
    <property type="match status" value="3"/>
</dbReference>
<dbReference type="Gene3D" id="4.10.860.10">
    <property type="entry name" value="UVR domain"/>
    <property type="match status" value="1"/>
</dbReference>
<dbReference type="HAMAP" id="MF_00204">
    <property type="entry name" value="UvrB"/>
    <property type="match status" value="1"/>
</dbReference>
<dbReference type="InterPro" id="IPR006935">
    <property type="entry name" value="Helicase/UvrB_N"/>
</dbReference>
<dbReference type="InterPro" id="IPR014001">
    <property type="entry name" value="Helicase_ATP-bd"/>
</dbReference>
<dbReference type="InterPro" id="IPR001650">
    <property type="entry name" value="Helicase_C-like"/>
</dbReference>
<dbReference type="InterPro" id="IPR027417">
    <property type="entry name" value="P-loop_NTPase"/>
</dbReference>
<dbReference type="InterPro" id="IPR001943">
    <property type="entry name" value="UVR_dom"/>
</dbReference>
<dbReference type="InterPro" id="IPR036876">
    <property type="entry name" value="UVR_dom_sf"/>
</dbReference>
<dbReference type="InterPro" id="IPR004807">
    <property type="entry name" value="UvrB"/>
</dbReference>
<dbReference type="InterPro" id="IPR041471">
    <property type="entry name" value="UvrB_inter"/>
</dbReference>
<dbReference type="InterPro" id="IPR024759">
    <property type="entry name" value="UvrB_YAD/RRR_dom"/>
</dbReference>
<dbReference type="NCBIfam" id="NF003673">
    <property type="entry name" value="PRK05298.1"/>
    <property type="match status" value="1"/>
</dbReference>
<dbReference type="NCBIfam" id="TIGR00631">
    <property type="entry name" value="uvrb"/>
    <property type="match status" value="1"/>
</dbReference>
<dbReference type="PANTHER" id="PTHR24029">
    <property type="entry name" value="UVRABC SYSTEM PROTEIN B"/>
    <property type="match status" value="1"/>
</dbReference>
<dbReference type="PANTHER" id="PTHR24029:SF0">
    <property type="entry name" value="UVRABC SYSTEM PROTEIN B"/>
    <property type="match status" value="1"/>
</dbReference>
<dbReference type="Pfam" id="PF00271">
    <property type="entry name" value="Helicase_C"/>
    <property type="match status" value="1"/>
</dbReference>
<dbReference type="Pfam" id="PF04851">
    <property type="entry name" value="ResIII"/>
    <property type="match status" value="1"/>
</dbReference>
<dbReference type="Pfam" id="PF02151">
    <property type="entry name" value="UVR"/>
    <property type="match status" value="1"/>
</dbReference>
<dbReference type="Pfam" id="PF12344">
    <property type="entry name" value="UvrB"/>
    <property type="match status" value="1"/>
</dbReference>
<dbReference type="Pfam" id="PF17757">
    <property type="entry name" value="UvrB_inter"/>
    <property type="match status" value="1"/>
</dbReference>
<dbReference type="SMART" id="SM00487">
    <property type="entry name" value="DEXDc"/>
    <property type="match status" value="1"/>
</dbReference>
<dbReference type="SMART" id="SM00490">
    <property type="entry name" value="HELICc"/>
    <property type="match status" value="1"/>
</dbReference>
<dbReference type="SUPFAM" id="SSF46600">
    <property type="entry name" value="C-terminal UvrC-binding domain of UvrB"/>
    <property type="match status" value="1"/>
</dbReference>
<dbReference type="SUPFAM" id="SSF52540">
    <property type="entry name" value="P-loop containing nucleoside triphosphate hydrolases"/>
    <property type="match status" value="2"/>
</dbReference>
<dbReference type="PROSITE" id="PS51192">
    <property type="entry name" value="HELICASE_ATP_BIND_1"/>
    <property type="match status" value="1"/>
</dbReference>
<dbReference type="PROSITE" id="PS51194">
    <property type="entry name" value="HELICASE_CTER"/>
    <property type="match status" value="1"/>
</dbReference>
<dbReference type="PROSITE" id="PS50151">
    <property type="entry name" value="UVR"/>
    <property type="match status" value="1"/>
</dbReference>
<gene>
    <name evidence="1" type="primary">uvrB</name>
    <name type="ordered locus">CBU_0518</name>
</gene>
<evidence type="ECO:0000255" key="1">
    <source>
        <dbReference type="HAMAP-Rule" id="MF_00204"/>
    </source>
</evidence>
<protein>
    <recommendedName>
        <fullName evidence="1">UvrABC system protein B</fullName>
        <shortName evidence="1">Protein UvrB</shortName>
    </recommendedName>
    <alternativeName>
        <fullName evidence="1">Excinuclease ABC subunit B</fullName>
    </alternativeName>
</protein>
<name>UVRB_COXBU</name>
<accession>Q83E18</accession>
<feature type="chain" id="PRO_0000227306" description="UvrABC system protein B">
    <location>
        <begin position="1"/>
        <end position="672"/>
    </location>
</feature>
<feature type="domain" description="Helicase ATP-binding" evidence="1">
    <location>
        <begin position="26"/>
        <end position="413"/>
    </location>
</feature>
<feature type="domain" description="Helicase C-terminal" evidence="1">
    <location>
        <begin position="430"/>
        <end position="592"/>
    </location>
</feature>
<feature type="domain" description="UVR" evidence="1">
    <location>
        <begin position="631"/>
        <end position="666"/>
    </location>
</feature>
<feature type="short sequence motif" description="Beta-hairpin">
    <location>
        <begin position="92"/>
        <end position="115"/>
    </location>
</feature>
<feature type="binding site" evidence="1">
    <location>
        <begin position="39"/>
        <end position="46"/>
    </location>
    <ligand>
        <name>ATP</name>
        <dbReference type="ChEBI" id="CHEBI:30616"/>
    </ligand>
</feature>
<keyword id="KW-0067">ATP-binding</keyword>
<keyword id="KW-0963">Cytoplasm</keyword>
<keyword id="KW-0227">DNA damage</keyword>
<keyword id="KW-0228">DNA excision</keyword>
<keyword id="KW-0234">DNA repair</keyword>
<keyword id="KW-0267">Excision nuclease</keyword>
<keyword id="KW-0547">Nucleotide-binding</keyword>
<keyword id="KW-1185">Reference proteome</keyword>
<keyword id="KW-0742">SOS response</keyword>